<accession>Q2JLR0</accession>
<proteinExistence type="inferred from homology"/>
<protein>
    <recommendedName>
        <fullName evidence="1">Diaminopimelate epimerase</fullName>
        <shortName evidence="1">DAP epimerase</shortName>
        <ecNumber evidence="1">5.1.1.7</ecNumber>
    </recommendedName>
    <alternativeName>
        <fullName evidence="1">PLP-independent amino acid racemase</fullName>
    </alternativeName>
</protein>
<dbReference type="EC" id="5.1.1.7" evidence="1"/>
<dbReference type="EMBL" id="CP000240">
    <property type="protein sequence ID" value="ABD02344.1"/>
    <property type="molecule type" value="Genomic_DNA"/>
</dbReference>
<dbReference type="SMR" id="Q2JLR0"/>
<dbReference type="STRING" id="321332.CYB_1371"/>
<dbReference type="KEGG" id="cyb:CYB_1371"/>
<dbReference type="eggNOG" id="COG0253">
    <property type="taxonomic scope" value="Bacteria"/>
</dbReference>
<dbReference type="HOGENOM" id="CLU_053306_2_1_3"/>
<dbReference type="OrthoDB" id="9805408at2"/>
<dbReference type="UniPathway" id="UPA00034">
    <property type="reaction ID" value="UER00025"/>
</dbReference>
<dbReference type="Proteomes" id="UP000001938">
    <property type="component" value="Chromosome"/>
</dbReference>
<dbReference type="GO" id="GO:0005829">
    <property type="term" value="C:cytosol"/>
    <property type="evidence" value="ECO:0007669"/>
    <property type="project" value="TreeGrafter"/>
</dbReference>
<dbReference type="GO" id="GO:0008837">
    <property type="term" value="F:diaminopimelate epimerase activity"/>
    <property type="evidence" value="ECO:0007669"/>
    <property type="project" value="UniProtKB-UniRule"/>
</dbReference>
<dbReference type="GO" id="GO:0009089">
    <property type="term" value="P:lysine biosynthetic process via diaminopimelate"/>
    <property type="evidence" value="ECO:0007669"/>
    <property type="project" value="UniProtKB-UniRule"/>
</dbReference>
<dbReference type="FunFam" id="3.10.310.10:FF:000009">
    <property type="entry name" value="Diaminopimelate epimerase chloroplastic"/>
    <property type="match status" value="1"/>
</dbReference>
<dbReference type="Gene3D" id="3.10.310.10">
    <property type="entry name" value="Diaminopimelate Epimerase, Chain A, domain 1"/>
    <property type="match status" value="2"/>
</dbReference>
<dbReference type="HAMAP" id="MF_00197">
    <property type="entry name" value="DAP_epimerase"/>
    <property type="match status" value="1"/>
</dbReference>
<dbReference type="InterPro" id="IPR018510">
    <property type="entry name" value="DAP_epimerase_AS"/>
</dbReference>
<dbReference type="InterPro" id="IPR001653">
    <property type="entry name" value="DAP_epimerase_DapF"/>
</dbReference>
<dbReference type="NCBIfam" id="TIGR00652">
    <property type="entry name" value="DapF"/>
    <property type="match status" value="1"/>
</dbReference>
<dbReference type="PANTHER" id="PTHR31689:SF0">
    <property type="entry name" value="DIAMINOPIMELATE EPIMERASE"/>
    <property type="match status" value="1"/>
</dbReference>
<dbReference type="PANTHER" id="PTHR31689">
    <property type="entry name" value="DIAMINOPIMELATE EPIMERASE, CHLOROPLASTIC"/>
    <property type="match status" value="1"/>
</dbReference>
<dbReference type="Pfam" id="PF01678">
    <property type="entry name" value="DAP_epimerase"/>
    <property type="match status" value="2"/>
</dbReference>
<dbReference type="SUPFAM" id="SSF54506">
    <property type="entry name" value="Diaminopimelate epimerase-like"/>
    <property type="match status" value="2"/>
</dbReference>
<dbReference type="PROSITE" id="PS01326">
    <property type="entry name" value="DAP_EPIMERASE"/>
    <property type="match status" value="1"/>
</dbReference>
<sequence length="285" mass="30949">MTPRLSFHKYQGLGNDFILVDNRWQSQPCLSPEEAVALCNRRFGVGADGVIFLLPGQEGADFSMRLFNSDGSEAEMCGNGIRCLARFLQDLGIPGRDGAYQIHTLAGRIVPQVRADGLVTVDMGIPRLLAKQIPTTLVEPDEKVIRQPLAVAGREWRVTAVSMGNPHCVVFLEEEGSLEELDLAAVGPLFEHHPAFPERTNTEFVQVLSPTRLRLRVWERGAGATLACGTGACAVLVAAVLEERAESQATVELPGGNLEIRWDPSTQHVWMTGPALHVFSGTTAG</sequence>
<organism>
    <name type="scientific">Synechococcus sp. (strain JA-2-3B'a(2-13))</name>
    <name type="common">Cyanobacteria bacterium Yellowstone B-Prime</name>
    <dbReference type="NCBI Taxonomy" id="321332"/>
    <lineage>
        <taxon>Bacteria</taxon>
        <taxon>Bacillati</taxon>
        <taxon>Cyanobacteriota</taxon>
        <taxon>Cyanophyceae</taxon>
        <taxon>Synechococcales</taxon>
        <taxon>Synechococcaceae</taxon>
        <taxon>Synechococcus</taxon>
    </lineage>
</organism>
<gene>
    <name evidence="1" type="primary">dapF</name>
    <name type="ordered locus">CYB_1371</name>
</gene>
<comment type="function">
    <text evidence="1">Catalyzes the stereoinversion of LL-2,6-diaminopimelate (L,L-DAP) to meso-diaminopimelate (meso-DAP), a precursor of L-lysine and an essential component of the bacterial peptidoglycan.</text>
</comment>
<comment type="catalytic activity">
    <reaction evidence="1">
        <text>(2S,6S)-2,6-diaminopimelate = meso-2,6-diaminopimelate</text>
        <dbReference type="Rhea" id="RHEA:15393"/>
        <dbReference type="ChEBI" id="CHEBI:57609"/>
        <dbReference type="ChEBI" id="CHEBI:57791"/>
        <dbReference type="EC" id="5.1.1.7"/>
    </reaction>
</comment>
<comment type="pathway">
    <text evidence="1">Amino-acid biosynthesis; L-lysine biosynthesis via DAP pathway; DL-2,6-diaminopimelate from LL-2,6-diaminopimelate: step 1/1.</text>
</comment>
<comment type="subunit">
    <text evidence="1">Homodimer.</text>
</comment>
<comment type="subcellular location">
    <subcellularLocation>
        <location evidence="1">Cytoplasm</location>
    </subcellularLocation>
</comment>
<comment type="similarity">
    <text evidence="1">Belongs to the diaminopimelate epimerase family.</text>
</comment>
<feature type="chain" id="PRO_1000011975" description="Diaminopimelate epimerase">
    <location>
        <begin position="1"/>
        <end position="285"/>
    </location>
</feature>
<feature type="active site" description="Proton donor" evidence="1">
    <location>
        <position position="77"/>
    </location>
</feature>
<feature type="active site" description="Proton acceptor" evidence="1">
    <location>
        <position position="228"/>
    </location>
</feature>
<feature type="binding site" evidence="1">
    <location>
        <position position="15"/>
    </location>
    <ligand>
        <name>substrate</name>
    </ligand>
</feature>
<feature type="binding site" evidence="1">
    <location>
        <position position="68"/>
    </location>
    <ligand>
        <name>substrate</name>
    </ligand>
</feature>
<feature type="binding site" evidence="1">
    <location>
        <begin position="78"/>
        <end position="79"/>
    </location>
    <ligand>
        <name>substrate</name>
    </ligand>
</feature>
<feature type="binding site" evidence="1">
    <location>
        <position position="165"/>
    </location>
    <ligand>
        <name>substrate</name>
    </ligand>
</feature>
<feature type="binding site" evidence="1">
    <location>
        <position position="201"/>
    </location>
    <ligand>
        <name>substrate</name>
    </ligand>
</feature>
<feature type="binding site" evidence="1">
    <location>
        <begin position="219"/>
        <end position="220"/>
    </location>
    <ligand>
        <name>substrate</name>
    </ligand>
</feature>
<feature type="binding site" evidence="1">
    <location>
        <begin position="229"/>
        <end position="230"/>
    </location>
    <ligand>
        <name>substrate</name>
    </ligand>
</feature>
<feature type="site" description="Could be important to modulate the pK values of the two catalytic cysteine residues" evidence="1">
    <location>
        <position position="167"/>
    </location>
</feature>
<feature type="site" description="Could be important to modulate the pK values of the two catalytic cysteine residues" evidence="1">
    <location>
        <position position="219"/>
    </location>
</feature>
<name>DAPF_SYNJB</name>
<keyword id="KW-0028">Amino-acid biosynthesis</keyword>
<keyword id="KW-0963">Cytoplasm</keyword>
<keyword id="KW-0413">Isomerase</keyword>
<keyword id="KW-0457">Lysine biosynthesis</keyword>
<keyword id="KW-1185">Reference proteome</keyword>
<reference key="1">
    <citation type="journal article" date="2007" name="ISME J.">
        <title>Population level functional diversity in a microbial community revealed by comparative genomic and metagenomic analyses.</title>
        <authorList>
            <person name="Bhaya D."/>
            <person name="Grossman A.R."/>
            <person name="Steunou A.-S."/>
            <person name="Khuri N."/>
            <person name="Cohan F.M."/>
            <person name="Hamamura N."/>
            <person name="Melendrez M.C."/>
            <person name="Bateson M.M."/>
            <person name="Ward D.M."/>
            <person name="Heidelberg J.F."/>
        </authorList>
    </citation>
    <scope>NUCLEOTIDE SEQUENCE [LARGE SCALE GENOMIC DNA]</scope>
    <source>
        <strain>JA-2-3B'a(2-13)</strain>
    </source>
</reference>
<evidence type="ECO:0000255" key="1">
    <source>
        <dbReference type="HAMAP-Rule" id="MF_00197"/>
    </source>
</evidence>